<sequence>MFKGLFKKTKYISLNPERKTELRSDQNDNKSNKPHIPDGLWEKCDSCKSIIYAEDLKKNYHICHECGHHFRIGAQERINQIIDEDTWVELDQNIISENPLEFEGYSEKVDKLQKKTELKEAILTGLGKINGQQAVIGAMDSRFLMGSMGSVVGEKVTRAIETGIDENLPVIMFTASGGARMQEGIYSLMQMAKTSAAISKLKDKGLPYIVVLTDPTTGGVTASFAMLGDIILAEPNALIGFAGKRVIEQTIKQKLPKEFQRAEFLLKHGFVDKVINRKEMRNKLSHILKLHKTKQPSRMLDGNDCSYYSSKDASKKASAKSVEEIRQQGKKLTPYDKVKLVRSKERPTSLDYIDNIFEGFIEFHGDRYFADDTSIVGGLAFLNGLPVTVIGQQKGRDLQENIYRNFGMPNPEGYRKAVRLMQQAEKFNRPIINFVDTSGAGCGKGAEERGQGEAIAQNLYTMSSLKVPIISLVIGEGGSGGALALTVADEVWMLENSVYSIVSPEGFASILWKDSSKAKEAADVMKITAQDLQELQIIDKILEEPYQDASKDGQAMSEIIKNNLLKTLDNLSKKETNDLLTKRYEKFRSIGRFIEKSNLDSSINQ</sequence>
<reference key="1">
    <citation type="submission" date="2008-04" db="EMBL/GenBank/DDBJ databases">
        <title>Complete sequence of chromosome of Natranaerobius thermophilus JW/NM-WN-LF.</title>
        <authorList>
            <consortium name="US DOE Joint Genome Institute"/>
            <person name="Copeland A."/>
            <person name="Lucas S."/>
            <person name="Lapidus A."/>
            <person name="Glavina del Rio T."/>
            <person name="Dalin E."/>
            <person name="Tice H."/>
            <person name="Bruce D."/>
            <person name="Goodwin L."/>
            <person name="Pitluck S."/>
            <person name="Chertkov O."/>
            <person name="Brettin T."/>
            <person name="Detter J.C."/>
            <person name="Han C."/>
            <person name="Kuske C.R."/>
            <person name="Schmutz J."/>
            <person name="Larimer F."/>
            <person name="Land M."/>
            <person name="Hauser L."/>
            <person name="Kyrpides N."/>
            <person name="Lykidis A."/>
            <person name="Mesbah N.M."/>
            <person name="Wiegel J."/>
        </authorList>
    </citation>
    <scope>NUCLEOTIDE SEQUENCE [LARGE SCALE GENOMIC DNA]</scope>
    <source>
        <strain>ATCC BAA-1301 / DSM 18059 / JW/NM-WN-LF</strain>
    </source>
</reference>
<protein>
    <recommendedName>
        <fullName>Acetyl-coenzyme A carboxylase carboxyl transferase subunits beta/alpha</fullName>
        <shortName>ACCase subunits beta/alpha</shortName>
        <shortName>Acetyl-CoA carboxylase carboxyltransferase subunits beta/alpha</shortName>
        <ecNumber>2.1.3.15</ecNumber>
    </recommendedName>
</protein>
<evidence type="ECO:0000250" key="1"/>
<evidence type="ECO:0000255" key="2"/>
<evidence type="ECO:0000255" key="3">
    <source>
        <dbReference type="PROSITE-ProRule" id="PRU01136"/>
    </source>
</evidence>
<evidence type="ECO:0000255" key="4">
    <source>
        <dbReference type="PROSITE-ProRule" id="PRU01137"/>
    </source>
</evidence>
<evidence type="ECO:0000255" key="5">
    <source>
        <dbReference type="PROSITE-ProRule" id="PRU01138"/>
    </source>
</evidence>
<evidence type="ECO:0000305" key="6"/>
<gene>
    <name type="primary">accD</name>
    <name type="synonym">accA</name>
    <name type="synonym">accDA</name>
    <name type="ordered locus">Nther_0846</name>
</gene>
<comment type="function">
    <text evidence="1">Component of the acetyl coenzyme A carboxylase (ACC) complex. Biotin carboxylase (BC) catalyzes the carboxylation of biotin on its carrier protein (BCCP) and then the CO(2) group is transferred by the transcarboxylase to acetyl-CoA to form malonyl-CoA (By similarity).</text>
</comment>
<comment type="catalytic activity">
    <reaction>
        <text>N(6)-carboxybiotinyl-L-lysyl-[protein] + acetyl-CoA = N(6)-biotinyl-L-lysyl-[protein] + malonyl-CoA</text>
        <dbReference type="Rhea" id="RHEA:54728"/>
        <dbReference type="Rhea" id="RHEA-COMP:10505"/>
        <dbReference type="Rhea" id="RHEA-COMP:10506"/>
        <dbReference type="ChEBI" id="CHEBI:57288"/>
        <dbReference type="ChEBI" id="CHEBI:57384"/>
        <dbReference type="ChEBI" id="CHEBI:83144"/>
        <dbReference type="ChEBI" id="CHEBI:83145"/>
        <dbReference type="EC" id="2.1.3.15"/>
    </reaction>
</comment>
<comment type="cofactor">
    <cofactor evidence="1">
        <name>Zn(2+)</name>
        <dbReference type="ChEBI" id="CHEBI:29105"/>
    </cofactor>
    <text evidence="1">Binds 1 zinc ion per subunit.</text>
</comment>
<comment type="pathway">
    <text>Lipid metabolism; malonyl-CoA biosynthesis; malonyl-CoA from acetyl-CoA: step 1/1.</text>
</comment>
<comment type="subunit">
    <text evidence="1">Acetyl-CoA carboxylase is a heterotetramer composed of biotin carboxyl carrier protein (AccB), biotin carboxylase (AccC) and two subunits of ACCase subunit beta/alpha.</text>
</comment>
<comment type="subcellular location">
    <subcellularLocation>
        <location evidence="1">Cytoplasm</location>
    </subcellularLocation>
</comment>
<comment type="similarity">
    <text evidence="6">In the N-terminal section; belongs to the AccD/PCCB family.</text>
</comment>
<comment type="similarity">
    <text evidence="6">In the C-terminal section; belongs to the AccA family.</text>
</comment>
<dbReference type="EC" id="2.1.3.15"/>
<dbReference type="EMBL" id="CP001034">
    <property type="protein sequence ID" value="ACB84431.1"/>
    <property type="molecule type" value="Genomic_DNA"/>
</dbReference>
<dbReference type="RefSeq" id="WP_012447309.1">
    <property type="nucleotide sequence ID" value="NC_010718.1"/>
</dbReference>
<dbReference type="SMR" id="B2A865"/>
<dbReference type="STRING" id="457570.Nther_0846"/>
<dbReference type="KEGG" id="nth:Nther_0846"/>
<dbReference type="eggNOG" id="COG0777">
    <property type="taxonomic scope" value="Bacteria"/>
</dbReference>
<dbReference type="eggNOG" id="COG0825">
    <property type="taxonomic scope" value="Bacteria"/>
</dbReference>
<dbReference type="HOGENOM" id="CLU_015486_3_1_9"/>
<dbReference type="InParanoid" id="B2A865"/>
<dbReference type="OrthoDB" id="9772975at2"/>
<dbReference type="UniPathway" id="UPA00655">
    <property type="reaction ID" value="UER00711"/>
</dbReference>
<dbReference type="Proteomes" id="UP000001683">
    <property type="component" value="Chromosome"/>
</dbReference>
<dbReference type="GO" id="GO:0009317">
    <property type="term" value="C:acetyl-CoA carboxylase complex"/>
    <property type="evidence" value="ECO:0007669"/>
    <property type="project" value="InterPro"/>
</dbReference>
<dbReference type="GO" id="GO:0003989">
    <property type="term" value="F:acetyl-CoA carboxylase activity"/>
    <property type="evidence" value="ECO:0007669"/>
    <property type="project" value="InterPro"/>
</dbReference>
<dbReference type="GO" id="GO:0005524">
    <property type="term" value="F:ATP binding"/>
    <property type="evidence" value="ECO:0007669"/>
    <property type="project" value="UniProtKB-KW"/>
</dbReference>
<dbReference type="GO" id="GO:0016743">
    <property type="term" value="F:carboxyl- or carbamoyltransferase activity"/>
    <property type="evidence" value="ECO:0007669"/>
    <property type="project" value="UniProtKB-UniRule"/>
</dbReference>
<dbReference type="GO" id="GO:0008270">
    <property type="term" value="F:zinc ion binding"/>
    <property type="evidence" value="ECO:0007669"/>
    <property type="project" value="UniProtKB-UniRule"/>
</dbReference>
<dbReference type="GO" id="GO:0006633">
    <property type="term" value="P:fatty acid biosynthetic process"/>
    <property type="evidence" value="ECO:0007669"/>
    <property type="project" value="UniProtKB-KW"/>
</dbReference>
<dbReference type="GO" id="GO:2001295">
    <property type="term" value="P:malonyl-CoA biosynthetic process"/>
    <property type="evidence" value="ECO:0007669"/>
    <property type="project" value="UniProtKB-UniRule"/>
</dbReference>
<dbReference type="Gene3D" id="3.90.226.10">
    <property type="entry name" value="2-enoyl-CoA Hydratase, Chain A, domain 1"/>
    <property type="match status" value="2"/>
</dbReference>
<dbReference type="HAMAP" id="MF_00823">
    <property type="entry name" value="AcetylCoA_CT_alpha"/>
    <property type="match status" value="1"/>
</dbReference>
<dbReference type="HAMAP" id="MF_01395">
    <property type="entry name" value="AcetylCoA_CT_beta"/>
    <property type="match status" value="1"/>
</dbReference>
<dbReference type="InterPro" id="IPR001095">
    <property type="entry name" value="Acetyl_CoA_COase_a_su"/>
</dbReference>
<dbReference type="InterPro" id="IPR000438">
    <property type="entry name" value="Acetyl_CoA_COase_Trfase_b_su"/>
</dbReference>
<dbReference type="InterPro" id="IPR029045">
    <property type="entry name" value="ClpP/crotonase-like_dom_sf"/>
</dbReference>
<dbReference type="InterPro" id="IPR011763">
    <property type="entry name" value="COA_CT_C"/>
</dbReference>
<dbReference type="InterPro" id="IPR011762">
    <property type="entry name" value="COA_CT_N"/>
</dbReference>
<dbReference type="InterPro" id="IPR041010">
    <property type="entry name" value="Znf-ACC"/>
</dbReference>
<dbReference type="NCBIfam" id="TIGR00513">
    <property type="entry name" value="accA"/>
    <property type="match status" value="1"/>
</dbReference>
<dbReference type="NCBIfam" id="NF041504">
    <property type="entry name" value="AccA_sub"/>
    <property type="match status" value="1"/>
</dbReference>
<dbReference type="NCBIfam" id="TIGR00515">
    <property type="entry name" value="accD"/>
    <property type="match status" value="1"/>
</dbReference>
<dbReference type="NCBIfam" id="NF004344">
    <property type="entry name" value="PRK05724.1"/>
    <property type="match status" value="1"/>
</dbReference>
<dbReference type="PANTHER" id="PTHR42853">
    <property type="entry name" value="ACETYL-COENZYME A CARBOXYLASE CARBOXYL TRANSFERASE SUBUNIT ALPHA"/>
    <property type="match status" value="1"/>
</dbReference>
<dbReference type="PANTHER" id="PTHR42853:SF3">
    <property type="entry name" value="ACETYL-COENZYME A CARBOXYLASE CARBOXYL TRANSFERASE SUBUNIT ALPHA, CHLOROPLASTIC"/>
    <property type="match status" value="1"/>
</dbReference>
<dbReference type="Pfam" id="PF03255">
    <property type="entry name" value="ACCA"/>
    <property type="match status" value="1"/>
</dbReference>
<dbReference type="Pfam" id="PF17848">
    <property type="entry name" value="Zn_ribbon_ACC"/>
    <property type="match status" value="1"/>
</dbReference>
<dbReference type="PRINTS" id="PR01069">
    <property type="entry name" value="ACCCTRFRASEA"/>
</dbReference>
<dbReference type="SUPFAM" id="SSF52096">
    <property type="entry name" value="ClpP/crotonase"/>
    <property type="match status" value="2"/>
</dbReference>
<dbReference type="PROSITE" id="PS50989">
    <property type="entry name" value="COA_CT_CTER"/>
    <property type="match status" value="1"/>
</dbReference>
<dbReference type="PROSITE" id="PS50980">
    <property type="entry name" value="COA_CT_NTER"/>
    <property type="match status" value="1"/>
</dbReference>
<feature type="chain" id="PRO_0000359115" description="Acetyl-coenzyme A carboxylase carboxyl transferase subunits beta/alpha">
    <location>
        <begin position="1"/>
        <end position="605"/>
    </location>
</feature>
<feature type="domain" description="CoA carboxyltransferase N-terminal" evidence="3">
    <location>
        <begin position="40"/>
        <end position="306"/>
    </location>
</feature>
<feature type="domain" description="CoA carboxyltransferase C-terminal" evidence="4">
    <location>
        <begin position="317"/>
        <end position="570"/>
    </location>
</feature>
<feature type="zinc finger region" description="C4-type" evidence="2">
    <location>
        <begin position="44"/>
        <end position="66"/>
    </location>
</feature>
<feature type="region of interest" description="Acetyl-coenzyme A carboxylase carboxyl transferase subunit beta" evidence="1">
    <location>
        <begin position="1"/>
        <end position="269"/>
    </location>
</feature>
<feature type="region of interest" description="Carboxyltransferase" evidence="5">
    <location>
        <begin position="40"/>
        <end position="570"/>
    </location>
</feature>
<feature type="region of interest" description="Acetyl-coenzyme A carboxylase carboxyl transferase subunit alpha" evidence="1">
    <location>
        <begin position="270"/>
        <end position="593"/>
    </location>
</feature>
<feature type="binding site" evidence="1">
    <location>
        <position position="44"/>
    </location>
    <ligand>
        <name>Zn(2+)</name>
        <dbReference type="ChEBI" id="CHEBI:29105"/>
    </ligand>
</feature>
<feature type="binding site" evidence="1">
    <location>
        <position position="47"/>
    </location>
    <ligand>
        <name>Zn(2+)</name>
        <dbReference type="ChEBI" id="CHEBI:29105"/>
    </ligand>
</feature>
<feature type="binding site" evidence="1">
    <location>
        <position position="63"/>
    </location>
    <ligand>
        <name>Zn(2+)</name>
        <dbReference type="ChEBI" id="CHEBI:29105"/>
    </ligand>
</feature>
<feature type="binding site" evidence="1">
    <location>
        <position position="66"/>
    </location>
    <ligand>
        <name>Zn(2+)</name>
        <dbReference type="ChEBI" id="CHEBI:29105"/>
    </ligand>
</feature>
<name>ACCDA_NATTJ</name>
<proteinExistence type="inferred from homology"/>
<keyword id="KW-0067">ATP-binding</keyword>
<keyword id="KW-0963">Cytoplasm</keyword>
<keyword id="KW-0275">Fatty acid biosynthesis</keyword>
<keyword id="KW-0276">Fatty acid metabolism</keyword>
<keyword id="KW-0444">Lipid biosynthesis</keyword>
<keyword id="KW-0443">Lipid metabolism</keyword>
<keyword id="KW-0479">Metal-binding</keyword>
<keyword id="KW-0547">Nucleotide-binding</keyword>
<keyword id="KW-1185">Reference proteome</keyword>
<keyword id="KW-0808">Transferase</keyword>
<keyword id="KW-0862">Zinc</keyword>
<keyword id="KW-0863">Zinc-finger</keyword>
<accession>B2A865</accession>
<organism>
    <name type="scientific">Natranaerobius thermophilus (strain ATCC BAA-1301 / DSM 18059 / JW/NM-WN-LF)</name>
    <dbReference type="NCBI Taxonomy" id="457570"/>
    <lineage>
        <taxon>Bacteria</taxon>
        <taxon>Bacillati</taxon>
        <taxon>Bacillota</taxon>
        <taxon>Clostridia</taxon>
        <taxon>Natranaerobiales</taxon>
        <taxon>Natranaerobiaceae</taxon>
        <taxon>Natranaerobius</taxon>
    </lineage>
</organism>